<feature type="chain" id="PRO_0000328116" description="PCI domain-containing protein 2 homolog">
    <location>
        <begin position="1"/>
        <end position="430"/>
    </location>
</feature>
<feature type="domain" description="PCI" evidence="1">
    <location>
        <begin position="243"/>
        <end position="424"/>
    </location>
</feature>
<sequence>MAELTNHFNKVNELLNDWDGVGLSHELSMTELITSILNSINHNSHSGMSNQKKQQIQAKVNQIKKTDLVVKRQQDIDTLCANKIQHNYNEIVAYRLRSISSLLDSKYYDAFRYLIEAINSFVKVFELWSQNILWRLSLDLRLMAELATLNVGSNDSNNSNNNVTIDYFEEASRTLLSKCFQAANADRTPNLAESKKNAALGVVNQLFQIYFKINNLKLCKNLIKTMESPGFPTLESYPLNQVITYRFFNGRLSVFNGQYKKAQEELLYAFNKCPNDSIKNKRLILLFLVPMQLEQCKFPKKSLLEKFKLTQFIDIVQSIKSGNIKQFNECLSTHQNFFISKGIYLILEKLKIIVYRNLFKKVHLITTGQRIPIGNFVSALKWMENDAIDIDETECILSNLIYNGYLKGYISHKVALVVSPTNPFPKLPLN</sequence>
<name>PCID2_DICDI</name>
<gene>
    <name type="primary">pcid2</name>
    <name type="ORF">DDB_G0284241</name>
</gene>
<accession>Q54PX7</accession>
<evidence type="ECO:0000255" key="1">
    <source>
        <dbReference type="PROSITE-ProRule" id="PRU01185"/>
    </source>
</evidence>
<evidence type="ECO:0000305" key="2"/>
<organism>
    <name type="scientific">Dictyostelium discoideum</name>
    <name type="common">Social amoeba</name>
    <dbReference type="NCBI Taxonomy" id="44689"/>
    <lineage>
        <taxon>Eukaryota</taxon>
        <taxon>Amoebozoa</taxon>
        <taxon>Evosea</taxon>
        <taxon>Eumycetozoa</taxon>
        <taxon>Dictyostelia</taxon>
        <taxon>Dictyosteliales</taxon>
        <taxon>Dictyosteliaceae</taxon>
        <taxon>Dictyostelium</taxon>
    </lineage>
</organism>
<keyword id="KW-1185">Reference proteome</keyword>
<dbReference type="EMBL" id="AAFI02000064">
    <property type="protein sequence ID" value="EAL65309.1"/>
    <property type="molecule type" value="Genomic_DNA"/>
</dbReference>
<dbReference type="RefSeq" id="XP_638668.1">
    <property type="nucleotide sequence ID" value="XM_633576.1"/>
</dbReference>
<dbReference type="SMR" id="Q54PX7"/>
<dbReference type="FunCoup" id="Q54PX7">
    <property type="interactions" value="903"/>
</dbReference>
<dbReference type="STRING" id="44689.Q54PX7"/>
<dbReference type="PaxDb" id="44689-DDB0305019"/>
<dbReference type="EnsemblProtists" id="EAL65309">
    <property type="protein sequence ID" value="EAL65309"/>
    <property type="gene ID" value="DDB_G0284241"/>
</dbReference>
<dbReference type="GeneID" id="8624497"/>
<dbReference type="KEGG" id="ddi:DDB_G0284241"/>
<dbReference type="dictyBase" id="DDB_G0284241"/>
<dbReference type="VEuPathDB" id="AmoebaDB:DDB_G0284241"/>
<dbReference type="eggNOG" id="KOG2688">
    <property type="taxonomic scope" value="Eukaryota"/>
</dbReference>
<dbReference type="HOGENOM" id="CLU_031567_2_0_1"/>
<dbReference type="InParanoid" id="Q54PX7"/>
<dbReference type="OMA" id="INRMFTL"/>
<dbReference type="PhylomeDB" id="Q54PX7"/>
<dbReference type="PRO" id="PR:Q54PX7"/>
<dbReference type="Proteomes" id="UP000002195">
    <property type="component" value="Chromosome 4"/>
</dbReference>
<dbReference type="GO" id="GO:0070390">
    <property type="term" value="C:transcription export complex 2"/>
    <property type="evidence" value="ECO:0000318"/>
    <property type="project" value="GO_Central"/>
</dbReference>
<dbReference type="GO" id="GO:0003690">
    <property type="term" value="F:double-stranded DNA binding"/>
    <property type="evidence" value="ECO:0000318"/>
    <property type="project" value="GO_Central"/>
</dbReference>
<dbReference type="GO" id="GO:0003723">
    <property type="term" value="F:RNA binding"/>
    <property type="evidence" value="ECO:0000318"/>
    <property type="project" value="GO_Central"/>
</dbReference>
<dbReference type="GO" id="GO:0016973">
    <property type="term" value="P:poly(A)+ mRNA export from nucleus"/>
    <property type="evidence" value="ECO:0000318"/>
    <property type="project" value="GO_Central"/>
</dbReference>
<dbReference type="GO" id="GO:0000973">
    <property type="term" value="P:post-transcriptional tethering of RNA polymerase II gene DNA at nuclear periphery"/>
    <property type="evidence" value="ECO:0000318"/>
    <property type="project" value="GO_Central"/>
</dbReference>
<dbReference type="GO" id="GO:0006368">
    <property type="term" value="P:transcription elongation by RNA polymerase II"/>
    <property type="evidence" value="ECO:0000318"/>
    <property type="project" value="GO_Central"/>
</dbReference>
<dbReference type="FunFam" id="1.10.10.10:FF:000146">
    <property type="entry name" value="PCI domain-containing protein 2 homolog"/>
    <property type="match status" value="1"/>
</dbReference>
<dbReference type="Gene3D" id="1.10.10.10">
    <property type="entry name" value="Winged helix-like DNA-binding domain superfamily/Winged helix DNA-binding domain"/>
    <property type="match status" value="1"/>
</dbReference>
<dbReference type="InterPro" id="IPR045114">
    <property type="entry name" value="Csn12-like"/>
</dbReference>
<dbReference type="InterPro" id="IPR000717">
    <property type="entry name" value="PCI_dom"/>
</dbReference>
<dbReference type="InterPro" id="IPR036388">
    <property type="entry name" value="WH-like_DNA-bd_sf"/>
</dbReference>
<dbReference type="PANTHER" id="PTHR12732:SF0">
    <property type="entry name" value="PCI DOMAIN-CONTAINING PROTEIN 2"/>
    <property type="match status" value="1"/>
</dbReference>
<dbReference type="PANTHER" id="PTHR12732">
    <property type="entry name" value="UNCHARACTERIZED PROTEASOME COMPONENT REGION PCI-CONTAINING"/>
    <property type="match status" value="1"/>
</dbReference>
<dbReference type="Pfam" id="PF01399">
    <property type="entry name" value="PCI"/>
    <property type="match status" value="1"/>
</dbReference>
<dbReference type="SMART" id="SM00753">
    <property type="entry name" value="PAM"/>
    <property type="match status" value="1"/>
</dbReference>
<dbReference type="PROSITE" id="PS50250">
    <property type="entry name" value="PCI"/>
    <property type="match status" value="1"/>
</dbReference>
<proteinExistence type="inferred from homology"/>
<protein>
    <recommendedName>
        <fullName>PCI domain-containing protein 2 homolog</fullName>
    </recommendedName>
    <alternativeName>
        <fullName>CSN12-like protein</fullName>
    </alternativeName>
</protein>
<comment type="similarity">
    <text evidence="2">Belongs to the CSN12 family.</text>
</comment>
<reference key="1">
    <citation type="journal article" date="2005" name="Nature">
        <title>The genome of the social amoeba Dictyostelium discoideum.</title>
        <authorList>
            <person name="Eichinger L."/>
            <person name="Pachebat J.A."/>
            <person name="Gloeckner G."/>
            <person name="Rajandream M.A."/>
            <person name="Sucgang R."/>
            <person name="Berriman M."/>
            <person name="Song J."/>
            <person name="Olsen R."/>
            <person name="Szafranski K."/>
            <person name="Xu Q."/>
            <person name="Tunggal B."/>
            <person name="Kummerfeld S."/>
            <person name="Madera M."/>
            <person name="Konfortov B.A."/>
            <person name="Rivero F."/>
            <person name="Bankier A.T."/>
            <person name="Lehmann R."/>
            <person name="Hamlin N."/>
            <person name="Davies R."/>
            <person name="Gaudet P."/>
            <person name="Fey P."/>
            <person name="Pilcher K."/>
            <person name="Chen G."/>
            <person name="Saunders D."/>
            <person name="Sodergren E.J."/>
            <person name="Davis P."/>
            <person name="Kerhornou A."/>
            <person name="Nie X."/>
            <person name="Hall N."/>
            <person name="Anjard C."/>
            <person name="Hemphill L."/>
            <person name="Bason N."/>
            <person name="Farbrother P."/>
            <person name="Desany B."/>
            <person name="Just E."/>
            <person name="Morio T."/>
            <person name="Rost R."/>
            <person name="Churcher C.M."/>
            <person name="Cooper J."/>
            <person name="Haydock S."/>
            <person name="van Driessche N."/>
            <person name="Cronin A."/>
            <person name="Goodhead I."/>
            <person name="Muzny D.M."/>
            <person name="Mourier T."/>
            <person name="Pain A."/>
            <person name="Lu M."/>
            <person name="Harper D."/>
            <person name="Lindsay R."/>
            <person name="Hauser H."/>
            <person name="James K.D."/>
            <person name="Quiles M."/>
            <person name="Madan Babu M."/>
            <person name="Saito T."/>
            <person name="Buchrieser C."/>
            <person name="Wardroper A."/>
            <person name="Felder M."/>
            <person name="Thangavelu M."/>
            <person name="Johnson D."/>
            <person name="Knights A."/>
            <person name="Loulseged H."/>
            <person name="Mungall K.L."/>
            <person name="Oliver K."/>
            <person name="Price C."/>
            <person name="Quail M.A."/>
            <person name="Urushihara H."/>
            <person name="Hernandez J."/>
            <person name="Rabbinowitsch E."/>
            <person name="Steffen D."/>
            <person name="Sanders M."/>
            <person name="Ma J."/>
            <person name="Kohara Y."/>
            <person name="Sharp S."/>
            <person name="Simmonds M.N."/>
            <person name="Spiegler S."/>
            <person name="Tivey A."/>
            <person name="Sugano S."/>
            <person name="White B."/>
            <person name="Walker D."/>
            <person name="Woodward J.R."/>
            <person name="Winckler T."/>
            <person name="Tanaka Y."/>
            <person name="Shaulsky G."/>
            <person name="Schleicher M."/>
            <person name="Weinstock G.M."/>
            <person name="Rosenthal A."/>
            <person name="Cox E.C."/>
            <person name="Chisholm R.L."/>
            <person name="Gibbs R.A."/>
            <person name="Loomis W.F."/>
            <person name="Platzer M."/>
            <person name="Kay R.R."/>
            <person name="Williams J.G."/>
            <person name="Dear P.H."/>
            <person name="Noegel A.A."/>
            <person name="Barrell B.G."/>
            <person name="Kuspa A."/>
        </authorList>
    </citation>
    <scope>NUCLEOTIDE SEQUENCE [LARGE SCALE GENOMIC DNA]</scope>
    <source>
        <strain>AX4</strain>
    </source>
</reference>